<feature type="chain" id="PRO_0000265234" description="Large ribosomal subunit protein uL6">
    <location>
        <begin position="1"/>
        <end position="176"/>
    </location>
</feature>
<protein>
    <recommendedName>
        <fullName evidence="1">Large ribosomal subunit protein uL6</fullName>
    </recommendedName>
    <alternativeName>
        <fullName evidence="2">50S ribosomal protein L6</fullName>
    </alternativeName>
</protein>
<name>RL6_BURL3</name>
<keyword id="KW-0687">Ribonucleoprotein</keyword>
<keyword id="KW-0689">Ribosomal protein</keyword>
<keyword id="KW-0694">RNA-binding</keyword>
<keyword id="KW-0699">rRNA-binding</keyword>
<dbReference type="EMBL" id="CP000151">
    <property type="protein sequence ID" value="ABB07064.1"/>
    <property type="molecule type" value="Genomic_DNA"/>
</dbReference>
<dbReference type="RefSeq" id="WP_011350678.1">
    <property type="nucleotide sequence ID" value="NZ_CABVQH010000018.1"/>
</dbReference>
<dbReference type="SMR" id="Q39KF2"/>
<dbReference type="GeneID" id="71054629"/>
<dbReference type="KEGG" id="bur:Bcep18194_A3462"/>
<dbReference type="PATRIC" id="fig|482957.22.peg.303"/>
<dbReference type="HOGENOM" id="CLU_065464_1_2_4"/>
<dbReference type="Proteomes" id="UP000002705">
    <property type="component" value="Chromosome 1"/>
</dbReference>
<dbReference type="GO" id="GO:0022625">
    <property type="term" value="C:cytosolic large ribosomal subunit"/>
    <property type="evidence" value="ECO:0007669"/>
    <property type="project" value="TreeGrafter"/>
</dbReference>
<dbReference type="GO" id="GO:0019843">
    <property type="term" value="F:rRNA binding"/>
    <property type="evidence" value="ECO:0007669"/>
    <property type="project" value="UniProtKB-UniRule"/>
</dbReference>
<dbReference type="GO" id="GO:0003735">
    <property type="term" value="F:structural constituent of ribosome"/>
    <property type="evidence" value="ECO:0007669"/>
    <property type="project" value="InterPro"/>
</dbReference>
<dbReference type="GO" id="GO:0002181">
    <property type="term" value="P:cytoplasmic translation"/>
    <property type="evidence" value="ECO:0007669"/>
    <property type="project" value="TreeGrafter"/>
</dbReference>
<dbReference type="FunFam" id="3.90.930.12:FF:000001">
    <property type="entry name" value="50S ribosomal protein L6"/>
    <property type="match status" value="1"/>
</dbReference>
<dbReference type="Gene3D" id="3.90.930.12">
    <property type="entry name" value="Ribosomal protein L6, alpha-beta domain"/>
    <property type="match status" value="2"/>
</dbReference>
<dbReference type="HAMAP" id="MF_01365_B">
    <property type="entry name" value="Ribosomal_uL6_B"/>
    <property type="match status" value="1"/>
</dbReference>
<dbReference type="InterPro" id="IPR000702">
    <property type="entry name" value="Ribosomal_uL6-like"/>
</dbReference>
<dbReference type="InterPro" id="IPR036789">
    <property type="entry name" value="Ribosomal_uL6-like_a/b-dom_sf"/>
</dbReference>
<dbReference type="InterPro" id="IPR020040">
    <property type="entry name" value="Ribosomal_uL6_a/b-dom"/>
</dbReference>
<dbReference type="InterPro" id="IPR019906">
    <property type="entry name" value="Ribosomal_uL6_bac-type"/>
</dbReference>
<dbReference type="InterPro" id="IPR002358">
    <property type="entry name" value="Ribosomal_uL6_CS"/>
</dbReference>
<dbReference type="NCBIfam" id="TIGR03654">
    <property type="entry name" value="L6_bact"/>
    <property type="match status" value="1"/>
</dbReference>
<dbReference type="PANTHER" id="PTHR11655">
    <property type="entry name" value="60S/50S RIBOSOMAL PROTEIN L6/L9"/>
    <property type="match status" value="1"/>
</dbReference>
<dbReference type="PANTHER" id="PTHR11655:SF14">
    <property type="entry name" value="LARGE RIBOSOMAL SUBUNIT PROTEIN UL6M"/>
    <property type="match status" value="1"/>
</dbReference>
<dbReference type="Pfam" id="PF00347">
    <property type="entry name" value="Ribosomal_L6"/>
    <property type="match status" value="2"/>
</dbReference>
<dbReference type="PIRSF" id="PIRSF002162">
    <property type="entry name" value="Ribosomal_L6"/>
    <property type="match status" value="1"/>
</dbReference>
<dbReference type="PRINTS" id="PR00059">
    <property type="entry name" value="RIBOSOMALL6"/>
</dbReference>
<dbReference type="SUPFAM" id="SSF56053">
    <property type="entry name" value="Ribosomal protein L6"/>
    <property type="match status" value="2"/>
</dbReference>
<dbReference type="PROSITE" id="PS00525">
    <property type="entry name" value="RIBOSOMAL_L6_1"/>
    <property type="match status" value="1"/>
</dbReference>
<proteinExistence type="inferred from homology"/>
<sequence>MSRVGKSPIALQGAEVKLADGAITVKGPLGTITQAINPLVNVANNDGTLNLAPVDESREANALSGTMRAIIANAVHGVTKGFERKLTLVGVGYRAQAQGDKLNLSLGFSHPVVHQMPEGVKAETPTQTEIVIKGINKQQVGQVAAEVRGYRPPEPYKGKGVRYSDEVVILKETKKK</sequence>
<evidence type="ECO:0000255" key="1">
    <source>
        <dbReference type="HAMAP-Rule" id="MF_01365"/>
    </source>
</evidence>
<evidence type="ECO:0000305" key="2"/>
<organism>
    <name type="scientific">Burkholderia lata (strain ATCC 17760 / DSM 23089 / LMG 22485 / NCIMB 9086 / R18194 / 383)</name>
    <dbReference type="NCBI Taxonomy" id="482957"/>
    <lineage>
        <taxon>Bacteria</taxon>
        <taxon>Pseudomonadati</taxon>
        <taxon>Pseudomonadota</taxon>
        <taxon>Betaproteobacteria</taxon>
        <taxon>Burkholderiales</taxon>
        <taxon>Burkholderiaceae</taxon>
        <taxon>Burkholderia</taxon>
        <taxon>Burkholderia cepacia complex</taxon>
    </lineage>
</organism>
<gene>
    <name evidence="1" type="primary">rplF</name>
    <name type="ordered locus">Bcep18194_A3462</name>
</gene>
<reference key="1">
    <citation type="submission" date="2005-10" db="EMBL/GenBank/DDBJ databases">
        <title>Complete sequence of chromosome 1 of Burkholderia sp. 383.</title>
        <authorList>
            <consortium name="US DOE Joint Genome Institute"/>
            <person name="Copeland A."/>
            <person name="Lucas S."/>
            <person name="Lapidus A."/>
            <person name="Barry K."/>
            <person name="Detter J.C."/>
            <person name="Glavina T."/>
            <person name="Hammon N."/>
            <person name="Israni S."/>
            <person name="Pitluck S."/>
            <person name="Chain P."/>
            <person name="Malfatti S."/>
            <person name="Shin M."/>
            <person name="Vergez L."/>
            <person name="Schmutz J."/>
            <person name="Larimer F."/>
            <person name="Land M."/>
            <person name="Kyrpides N."/>
            <person name="Lykidis A."/>
            <person name="Richardson P."/>
        </authorList>
    </citation>
    <scope>NUCLEOTIDE SEQUENCE [LARGE SCALE GENOMIC DNA]</scope>
    <source>
        <strain>ATCC 17760 / DSM 23089 / LMG 22485 / NCIMB 9086 / R18194 / 383</strain>
    </source>
</reference>
<comment type="function">
    <text evidence="1">This protein binds to the 23S rRNA, and is important in its secondary structure. It is located near the subunit interface in the base of the L7/L12 stalk, and near the tRNA binding site of the peptidyltransferase center.</text>
</comment>
<comment type="subunit">
    <text evidence="1">Part of the 50S ribosomal subunit.</text>
</comment>
<comment type="similarity">
    <text evidence="1">Belongs to the universal ribosomal protein uL6 family.</text>
</comment>
<accession>Q39KF2</accession>